<accession>P58548</accession>
<organism>
    <name type="scientific">Euplotes raikovi</name>
    <dbReference type="NCBI Taxonomy" id="5938"/>
    <lineage>
        <taxon>Eukaryota</taxon>
        <taxon>Sar</taxon>
        <taxon>Alveolata</taxon>
        <taxon>Ciliophora</taxon>
        <taxon>Intramacronucleata</taxon>
        <taxon>Spirotrichea</taxon>
        <taxon>Hypotrichia</taxon>
        <taxon>Euplotida</taxon>
        <taxon>Euplotidae</taxon>
        <taxon>Euplotes</taxon>
    </lineage>
</organism>
<dbReference type="PDB" id="1HD6">
    <property type="method" value="NMR"/>
    <property type="chains" value="A=1-37"/>
</dbReference>
<dbReference type="PDBsum" id="1HD6"/>
<dbReference type="SMR" id="P58548"/>
<dbReference type="EvolutionaryTrace" id="P58548"/>
<dbReference type="GO" id="GO:0005576">
    <property type="term" value="C:extracellular region"/>
    <property type="evidence" value="ECO:0007669"/>
    <property type="project" value="UniProtKB-SubCell"/>
</dbReference>
<dbReference type="GO" id="GO:0005186">
    <property type="term" value="F:pheromone activity"/>
    <property type="evidence" value="ECO:0007669"/>
    <property type="project" value="UniProtKB-KW"/>
</dbReference>
<dbReference type="InterPro" id="IPR009064">
    <property type="entry name" value="Pheromone_protoz"/>
</dbReference>
<dbReference type="InterPro" id="IPR036245">
    <property type="entry name" value="Pheromone_protoz_sf"/>
</dbReference>
<dbReference type="Pfam" id="PF06360">
    <property type="entry name" value="E_raikovi_mat"/>
    <property type="match status" value="1"/>
</dbReference>
<dbReference type="SUPFAM" id="SSF47014">
    <property type="entry name" value="Protozoan pheromone proteins"/>
    <property type="match status" value="1"/>
</dbReference>
<comment type="function">
    <text>Mating ciliate pheromones (or gamones) are diffusible extracellular communication signals that distinguish different intraspecific classes of cells commonly referred to as 'mating types'. They prepare the latter for conjugation by changing their cell surface properties.</text>
</comment>
<comment type="subcellular location">
    <subcellularLocation>
        <location>Secreted</location>
    </subcellularLocation>
</comment>
<sequence length="37" mass="3939">DICDIAIAQCSLTLCQDCENTPICELAVKGSCPPPWS</sequence>
<name>MER22_EUPRA</name>
<reference key="1">
    <citation type="journal article" date="2001" name="J. Biomol. NMR">
        <title>NMR structure of the pheromone Er-22 from Euplotes raikovi.</title>
        <authorList>
            <person name="Liu A."/>
            <person name="Luginbuhl P."/>
            <person name="Zerbe O."/>
            <person name="Ortenzi C."/>
            <person name="Luporini P."/>
            <person name="Wuethrich K."/>
        </authorList>
    </citation>
    <scope>STRUCTURE BY NMR</scope>
</reference>
<feature type="peptide" id="PRO_0000044737" description="Mating pheromone Er-22">
    <location>
        <begin position="1"/>
        <end position="37"/>
    </location>
</feature>
<feature type="disulfide bond">
    <location>
        <begin position="3"/>
        <end position="18"/>
    </location>
</feature>
<feature type="disulfide bond">
    <location>
        <begin position="10"/>
        <end position="32"/>
    </location>
</feature>
<feature type="disulfide bond">
    <location>
        <begin position="15"/>
        <end position="24"/>
    </location>
</feature>
<feature type="helix" evidence="1">
    <location>
        <begin position="2"/>
        <end position="9"/>
    </location>
</feature>
<feature type="helix" evidence="1">
    <location>
        <begin position="12"/>
        <end position="15"/>
    </location>
</feature>
<feature type="helix" evidence="1">
    <location>
        <begin position="21"/>
        <end position="31"/>
    </location>
</feature>
<proteinExistence type="evidence at protein level"/>
<evidence type="ECO:0007829" key="1">
    <source>
        <dbReference type="PDB" id="1HD6"/>
    </source>
</evidence>
<protein>
    <recommendedName>
        <fullName>Mating pheromone Er-22</fullName>
    </recommendedName>
    <alternativeName>
        <fullName>Euplomone R22</fullName>
    </alternativeName>
</protein>
<keyword id="KW-0002">3D-structure</keyword>
<keyword id="KW-1015">Disulfide bond</keyword>
<keyword id="KW-0588">Pheromone</keyword>
<keyword id="KW-0964">Secreted</keyword>
<gene>
    <name type="primary">MAT22</name>
</gene>